<protein>
    <recommendedName>
        <fullName evidence="1">ATP synthase subunit beta</fullName>
        <ecNumber evidence="1">7.1.2.2</ecNumber>
    </recommendedName>
    <alternativeName>
        <fullName evidence="1">ATP synthase F1 sector subunit beta</fullName>
    </alternativeName>
    <alternativeName>
        <fullName evidence="1">F-ATPase subunit beta</fullName>
    </alternativeName>
</protein>
<name>ATPB_STAS1</name>
<feature type="chain" id="PRO_0000254385" description="ATP synthase subunit beta">
    <location>
        <begin position="1"/>
        <end position="470"/>
    </location>
</feature>
<feature type="binding site" evidence="1">
    <location>
        <begin position="155"/>
        <end position="162"/>
    </location>
    <ligand>
        <name>ATP</name>
        <dbReference type="ChEBI" id="CHEBI:30616"/>
    </ligand>
</feature>
<sequence length="470" mass="51220">MGLGRVTQVMGPVIDVRFEHNEVPEINNALVVDVERDEGTVSLTLEVALQLGDDVVRTIAMDSTDGVKRGTEVRDSGDSISVPVGDATLGRVFNVLGDTIDLDEKLDTSVKRDPIHREAPAFDQLSTKVEILETGIKVIDLLAPYIKGGKIGLFGGAGVGKTVLIQELINNIAQEHGGISVFAGVGERTREGNDLYYEMSDSGVIKKTAMVFGQMNEPPGARMRVALSGLTMAEHFRDVQGQDVLLFIDNIFRFTQAGSEVSALLGRMPSAVGYQPTLATEMGQLQERITSTTKGSVTSIQAVFVPADDYTDPAPAAVFAHLDATTNLERKLTEMGIYPAVDPLASTSRALDPTIVGQDHYEIARDVQSTLQKYRELQDIIAILGMDELSEEDKQTVERARRIQFFLSQNFHVAEQFTGQKGSYVPVQKTVEGFKAILDGEYDHIPEDAFRLVGSMEEVIAKAKDMGVEV</sequence>
<dbReference type="EC" id="7.1.2.2" evidence="1"/>
<dbReference type="EMBL" id="AP008934">
    <property type="protein sequence ID" value="BAE17926.1"/>
    <property type="molecule type" value="Genomic_DNA"/>
</dbReference>
<dbReference type="RefSeq" id="WP_002482726.1">
    <property type="nucleotide sequence ID" value="NZ_MTGA01000032.1"/>
</dbReference>
<dbReference type="SMR" id="Q49Z50"/>
<dbReference type="GeneID" id="66866937"/>
<dbReference type="KEGG" id="ssp:SSP0781"/>
<dbReference type="eggNOG" id="COG0055">
    <property type="taxonomic scope" value="Bacteria"/>
</dbReference>
<dbReference type="HOGENOM" id="CLU_022398_0_2_9"/>
<dbReference type="OrthoDB" id="9801639at2"/>
<dbReference type="Proteomes" id="UP000006371">
    <property type="component" value="Chromosome"/>
</dbReference>
<dbReference type="GO" id="GO:0005886">
    <property type="term" value="C:plasma membrane"/>
    <property type="evidence" value="ECO:0007669"/>
    <property type="project" value="UniProtKB-SubCell"/>
</dbReference>
<dbReference type="GO" id="GO:0045259">
    <property type="term" value="C:proton-transporting ATP synthase complex"/>
    <property type="evidence" value="ECO:0007669"/>
    <property type="project" value="UniProtKB-KW"/>
</dbReference>
<dbReference type="GO" id="GO:0005524">
    <property type="term" value="F:ATP binding"/>
    <property type="evidence" value="ECO:0007669"/>
    <property type="project" value="UniProtKB-UniRule"/>
</dbReference>
<dbReference type="GO" id="GO:0016887">
    <property type="term" value="F:ATP hydrolysis activity"/>
    <property type="evidence" value="ECO:0007669"/>
    <property type="project" value="InterPro"/>
</dbReference>
<dbReference type="GO" id="GO:0046933">
    <property type="term" value="F:proton-transporting ATP synthase activity, rotational mechanism"/>
    <property type="evidence" value="ECO:0007669"/>
    <property type="project" value="UniProtKB-UniRule"/>
</dbReference>
<dbReference type="CDD" id="cd18110">
    <property type="entry name" value="ATP-synt_F1_beta_C"/>
    <property type="match status" value="1"/>
</dbReference>
<dbReference type="CDD" id="cd18115">
    <property type="entry name" value="ATP-synt_F1_beta_N"/>
    <property type="match status" value="1"/>
</dbReference>
<dbReference type="CDD" id="cd01133">
    <property type="entry name" value="F1-ATPase_beta_CD"/>
    <property type="match status" value="1"/>
</dbReference>
<dbReference type="FunFam" id="1.10.1140.10:FF:000001">
    <property type="entry name" value="ATP synthase subunit beta"/>
    <property type="match status" value="1"/>
</dbReference>
<dbReference type="FunFam" id="2.40.10.170:FF:000005">
    <property type="entry name" value="ATP synthase subunit beta"/>
    <property type="match status" value="1"/>
</dbReference>
<dbReference type="FunFam" id="3.40.50.300:FF:000004">
    <property type="entry name" value="ATP synthase subunit beta"/>
    <property type="match status" value="1"/>
</dbReference>
<dbReference type="Gene3D" id="2.40.10.170">
    <property type="match status" value="1"/>
</dbReference>
<dbReference type="Gene3D" id="1.10.1140.10">
    <property type="entry name" value="Bovine Mitochondrial F1-atpase, Atp Synthase Beta Chain, Chain D, domain 3"/>
    <property type="match status" value="1"/>
</dbReference>
<dbReference type="Gene3D" id="3.40.50.300">
    <property type="entry name" value="P-loop containing nucleotide triphosphate hydrolases"/>
    <property type="match status" value="1"/>
</dbReference>
<dbReference type="HAMAP" id="MF_01347">
    <property type="entry name" value="ATP_synth_beta_bact"/>
    <property type="match status" value="1"/>
</dbReference>
<dbReference type="InterPro" id="IPR003593">
    <property type="entry name" value="AAA+_ATPase"/>
</dbReference>
<dbReference type="InterPro" id="IPR055190">
    <property type="entry name" value="ATP-synt_VA_C"/>
</dbReference>
<dbReference type="InterPro" id="IPR005722">
    <property type="entry name" value="ATP_synth_F1_bsu"/>
</dbReference>
<dbReference type="InterPro" id="IPR020003">
    <property type="entry name" value="ATPase_a/bsu_AS"/>
</dbReference>
<dbReference type="InterPro" id="IPR050053">
    <property type="entry name" value="ATPase_alpha/beta_chains"/>
</dbReference>
<dbReference type="InterPro" id="IPR004100">
    <property type="entry name" value="ATPase_F1/V1/A1_a/bsu_N"/>
</dbReference>
<dbReference type="InterPro" id="IPR036121">
    <property type="entry name" value="ATPase_F1/V1/A1_a/bsu_N_sf"/>
</dbReference>
<dbReference type="InterPro" id="IPR000194">
    <property type="entry name" value="ATPase_F1/V1/A1_a/bsu_nucl-bd"/>
</dbReference>
<dbReference type="InterPro" id="IPR024034">
    <property type="entry name" value="ATPase_F1/V1_b/a_C"/>
</dbReference>
<dbReference type="InterPro" id="IPR027417">
    <property type="entry name" value="P-loop_NTPase"/>
</dbReference>
<dbReference type="NCBIfam" id="TIGR01039">
    <property type="entry name" value="atpD"/>
    <property type="match status" value="1"/>
</dbReference>
<dbReference type="PANTHER" id="PTHR15184">
    <property type="entry name" value="ATP SYNTHASE"/>
    <property type="match status" value="1"/>
</dbReference>
<dbReference type="PANTHER" id="PTHR15184:SF71">
    <property type="entry name" value="ATP SYNTHASE SUBUNIT BETA, MITOCHONDRIAL"/>
    <property type="match status" value="1"/>
</dbReference>
<dbReference type="Pfam" id="PF00006">
    <property type="entry name" value="ATP-synt_ab"/>
    <property type="match status" value="1"/>
</dbReference>
<dbReference type="Pfam" id="PF02874">
    <property type="entry name" value="ATP-synt_ab_N"/>
    <property type="match status" value="1"/>
</dbReference>
<dbReference type="Pfam" id="PF22919">
    <property type="entry name" value="ATP-synt_VA_C"/>
    <property type="match status" value="1"/>
</dbReference>
<dbReference type="SMART" id="SM00382">
    <property type="entry name" value="AAA"/>
    <property type="match status" value="1"/>
</dbReference>
<dbReference type="SUPFAM" id="SSF47917">
    <property type="entry name" value="C-terminal domain of alpha and beta subunits of F1 ATP synthase"/>
    <property type="match status" value="1"/>
</dbReference>
<dbReference type="SUPFAM" id="SSF50615">
    <property type="entry name" value="N-terminal domain of alpha and beta subunits of F1 ATP synthase"/>
    <property type="match status" value="1"/>
</dbReference>
<dbReference type="SUPFAM" id="SSF52540">
    <property type="entry name" value="P-loop containing nucleoside triphosphate hydrolases"/>
    <property type="match status" value="1"/>
</dbReference>
<dbReference type="PROSITE" id="PS00152">
    <property type="entry name" value="ATPASE_ALPHA_BETA"/>
    <property type="match status" value="1"/>
</dbReference>
<comment type="function">
    <text evidence="1">Produces ATP from ADP in the presence of a proton gradient across the membrane. The catalytic sites are hosted primarily by the beta subunits.</text>
</comment>
<comment type="catalytic activity">
    <reaction evidence="1">
        <text>ATP + H2O + 4 H(+)(in) = ADP + phosphate + 5 H(+)(out)</text>
        <dbReference type="Rhea" id="RHEA:57720"/>
        <dbReference type="ChEBI" id="CHEBI:15377"/>
        <dbReference type="ChEBI" id="CHEBI:15378"/>
        <dbReference type="ChEBI" id="CHEBI:30616"/>
        <dbReference type="ChEBI" id="CHEBI:43474"/>
        <dbReference type="ChEBI" id="CHEBI:456216"/>
        <dbReference type="EC" id="7.1.2.2"/>
    </reaction>
</comment>
<comment type="subunit">
    <text evidence="1">F-type ATPases have 2 components, CF(1) - the catalytic core - and CF(0) - the membrane proton channel. CF(1) has five subunits: alpha(3), beta(3), gamma(1), delta(1), epsilon(1). CF(0) has three main subunits: a(1), b(2) and c(9-12). The alpha and beta chains form an alternating ring which encloses part of the gamma chain. CF(1) is attached to CF(0) by a central stalk formed by the gamma and epsilon chains, while a peripheral stalk is formed by the delta and b chains.</text>
</comment>
<comment type="subcellular location">
    <subcellularLocation>
        <location evidence="1">Cell membrane</location>
        <topology evidence="1">Peripheral membrane protein</topology>
    </subcellularLocation>
</comment>
<comment type="similarity">
    <text evidence="1">Belongs to the ATPase alpha/beta chains family.</text>
</comment>
<keyword id="KW-0066">ATP synthesis</keyword>
<keyword id="KW-0067">ATP-binding</keyword>
<keyword id="KW-1003">Cell membrane</keyword>
<keyword id="KW-0139">CF(1)</keyword>
<keyword id="KW-0375">Hydrogen ion transport</keyword>
<keyword id="KW-0406">Ion transport</keyword>
<keyword id="KW-0472">Membrane</keyword>
<keyword id="KW-0547">Nucleotide-binding</keyword>
<keyword id="KW-1185">Reference proteome</keyword>
<keyword id="KW-1278">Translocase</keyword>
<keyword id="KW-0813">Transport</keyword>
<gene>
    <name evidence="1" type="primary">atpD</name>
    <name type="ordered locus">SSP0781</name>
</gene>
<evidence type="ECO:0000255" key="1">
    <source>
        <dbReference type="HAMAP-Rule" id="MF_01347"/>
    </source>
</evidence>
<proteinExistence type="inferred from homology"/>
<reference key="1">
    <citation type="journal article" date="2005" name="Proc. Natl. Acad. Sci. U.S.A.">
        <title>Whole genome sequence of Staphylococcus saprophyticus reveals the pathogenesis of uncomplicated urinary tract infection.</title>
        <authorList>
            <person name="Kuroda M."/>
            <person name="Yamashita A."/>
            <person name="Hirakawa H."/>
            <person name="Kumano M."/>
            <person name="Morikawa K."/>
            <person name="Higashide M."/>
            <person name="Maruyama A."/>
            <person name="Inose Y."/>
            <person name="Matoba K."/>
            <person name="Toh H."/>
            <person name="Kuhara S."/>
            <person name="Hattori M."/>
            <person name="Ohta T."/>
        </authorList>
    </citation>
    <scope>NUCLEOTIDE SEQUENCE [LARGE SCALE GENOMIC DNA]</scope>
    <source>
        <strain>ATCC 15305 / DSM 20229 / NCIMB 8711 / NCTC 7292 / S-41</strain>
    </source>
</reference>
<accession>Q49Z50</accession>
<organism>
    <name type="scientific">Staphylococcus saprophyticus subsp. saprophyticus (strain ATCC 15305 / DSM 20229 / NCIMB 8711 / NCTC 7292 / S-41)</name>
    <dbReference type="NCBI Taxonomy" id="342451"/>
    <lineage>
        <taxon>Bacteria</taxon>
        <taxon>Bacillati</taxon>
        <taxon>Bacillota</taxon>
        <taxon>Bacilli</taxon>
        <taxon>Bacillales</taxon>
        <taxon>Staphylococcaceae</taxon>
        <taxon>Staphylococcus</taxon>
    </lineage>
</organism>